<feature type="chain" id="PRO_0000137016" description="Nucleoside diphosphate kinase">
    <location>
        <begin position="1"/>
        <end position="148"/>
    </location>
</feature>
<feature type="active site" description="Pros-phosphohistidine intermediate" evidence="1">
    <location>
        <position position="115"/>
    </location>
</feature>
<feature type="binding site" evidence="1">
    <location>
        <position position="9"/>
    </location>
    <ligand>
        <name>ATP</name>
        <dbReference type="ChEBI" id="CHEBI:30616"/>
    </ligand>
</feature>
<feature type="binding site" evidence="1">
    <location>
        <position position="57"/>
    </location>
    <ligand>
        <name>ATP</name>
        <dbReference type="ChEBI" id="CHEBI:30616"/>
    </ligand>
</feature>
<feature type="binding site" evidence="1">
    <location>
        <position position="85"/>
    </location>
    <ligand>
        <name>ATP</name>
        <dbReference type="ChEBI" id="CHEBI:30616"/>
    </ligand>
</feature>
<feature type="binding site" evidence="1">
    <location>
        <position position="91"/>
    </location>
    <ligand>
        <name>ATP</name>
        <dbReference type="ChEBI" id="CHEBI:30616"/>
    </ligand>
</feature>
<feature type="binding site" evidence="1">
    <location>
        <position position="102"/>
    </location>
    <ligand>
        <name>ATP</name>
        <dbReference type="ChEBI" id="CHEBI:30616"/>
    </ligand>
</feature>
<feature type="binding site" evidence="1">
    <location>
        <position position="112"/>
    </location>
    <ligand>
        <name>ATP</name>
        <dbReference type="ChEBI" id="CHEBI:30616"/>
    </ligand>
</feature>
<feature type="modified residue" description="Phosphothreonine" evidence="1">
    <location>
        <position position="91"/>
    </location>
</feature>
<feature type="modified residue" description="Phosphoserine" evidence="1">
    <location>
        <position position="122"/>
    </location>
</feature>
<name>NDK_OCEIH</name>
<reference key="1">
    <citation type="journal article" date="2002" name="Nucleic Acids Res.">
        <title>Genome sequence of Oceanobacillus iheyensis isolated from the Iheya Ridge and its unexpected adaptive capabilities to extreme environments.</title>
        <authorList>
            <person name="Takami H."/>
            <person name="Takaki Y."/>
            <person name="Uchiyama I."/>
        </authorList>
    </citation>
    <scope>NUCLEOTIDE SEQUENCE [LARGE SCALE GENOMIC DNA]</scope>
    <source>
        <strain>DSM 14371 / CIP 107618 / JCM 11309 / KCTC 3954 / HTE831</strain>
    </source>
</reference>
<gene>
    <name evidence="1" type="primary">ndk</name>
    <name type="ordered locus">OB1787</name>
</gene>
<keyword id="KW-0067">ATP-binding</keyword>
<keyword id="KW-0963">Cytoplasm</keyword>
<keyword id="KW-0418">Kinase</keyword>
<keyword id="KW-0460">Magnesium</keyword>
<keyword id="KW-0479">Metal-binding</keyword>
<keyword id="KW-0546">Nucleotide metabolism</keyword>
<keyword id="KW-0547">Nucleotide-binding</keyword>
<keyword id="KW-0597">Phosphoprotein</keyword>
<keyword id="KW-1185">Reference proteome</keyword>
<keyword id="KW-0808">Transferase</keyword>
<proteinExistence type="inferred from homology"/>
<protein>
    <recommendedName>
        <fullName evidence="1">Nucleoside diphosphate kinase</fullName>
        <shortName evidence="1">NDK</shortName>
        <shortName evidence="1">NDP kinase</shortName>
        <ecNumber evidence="1">2.7.4.6</ecNumber>
    </recommendedName>
    <alternativeName>
        <fullName evidence="1">Nucleoside-2-P kinase</fullName>
    </alternativeName>
</protein>
<evidence type="ECO:0000255" key="1">
    <source>
        <dbReference type="HAMAP-Rule" id="MF_00451"/>
    </source>
</evidence>
<comment type="function">
    <text evidence="1">Major role in the synthesis of nucleoside triphosphates other than ATP. The ATP gamma phosphate is transferred to the NDP beta phosphate via a ping-pong mechanism, using a phosphorylated active-site intermediate.</text>
</comment>
<comment type="catalytic activity">
    <reaction evidence="1">
        <text>a 2'-deoxyribonucleoside 5'-diphosphate + ATP = a 2'-deoxyribonucleoside 5'-triphosphate + ADP</text>
        <dbReference type="Rhea" id="RHEA:44640"/>
        <dbReference type="ChEBI" id="CHEBI:30616"/>
        <dbReference type="ChEBI" id="CHEBI:61560"/>
        <dbReference type="ChEBI" id="CHEBI:73316"/>
        <dbReference type="ChEBI" id="CHEBI:456216"/>
        <dbReference type="EC" id="2.7.4.6"/>
    </reaction>
</comment>
<comment type="catalytic activity">
    <reaction evidence="1">
        <text>a ribonucleoside 5'-diphosphate + ATP = a ribonucleoside 5'-triphosphate + ADP</text>
        <dbReference type="Rhea" id="RHEA:18113"/>
        <dbReference type="ChEBI" id="CHEBI:30616"/>
        <dbReference type="ChEBI" id="CHEBI:57930"/>
        <dbReference type="ChEBI" id="CHEBI:61557"/>
        <dbReference type="ChEBI" id="CHEBI:456216"/>
        <dbReference type="EC" id="2.7.4.6"/>
    </reaction>
</comment>
<comment type="cofactor">
    <cofactor evidence="1">
        <name>Mg(2+)</name>
        <dbReference type="ChEBI" id="CHEBI:18420"/>
    </cofactor>
</comment>
<comment type="subunit">
    <text evidence="1">Homotetramer.</text>
</comment>
<comment type="subcellular location">
    <subcellularLocation>
        <location evidence="1">Cytoplasm</location>
    </subcellularLocation>
</comment>
<comment type="similarity">
    <text evidence="1">Belongs to the NDK family.</text>
</comment>
<dbReference type="EC" id="2.7.4.6" evidence="1"/>
<dbReference type="EMBL" id="BA000028">
    <property type="protein sequence ID" value="BAC13743.1"/>
    <property type="molecule type" value="Genomic_DNA"/>
</dbReference>
<dbReference type="RefSeq" id="WP_011066186.1">
    <property type="nucleotide sequence ID" value="NC_004193.1"/>
</dbReference>
<dbReference type="SMR" id="Q8EQB4"/>
<dbReference type="STRING" id="221109.gene:10734027"/>
<dbReference type="KEGG" id="oih:OB1787"/>
<dbReference type="eggNOG" id="COG0105">
    <property type="taxonomic scope" value="Bacteria"/>
</dbReference>
<dbReference type="HOGENOM" id="CLU_060216_6_3_9"/>
<dbReference type="OrthoDB" id="9801161at2"/>
<dbReference type="PhylomeDB" id="Q8EQB4"/>
<dbReference type="Proteomes" id="UP000000822">
    <property type="component" value="Chromosome"/>
</dbReference>
<dbReference type="GO" id="GO:0005737">
    <property type="term" value="C:cytoplasm"/>
    <property type="evidence" value="ECO:0007669"/>
    <property type="project" value="UniProtKB-SubCell"/>
</dbReference>
<dbReference type="GO" id="GO:0005524">
    <property type="term" value="F:ATP binding"/>
    <property type="evidence" value="ECO:0007669"/>
    <property type="project" value="UniProtKB-UniRule"/>
</dbReference>
<dbReference type="GO" id="GO:0046872">
    <property type="term" value="F:metal ion binding"/>
    <property type="evidence" value="ECO:0007669"/>
    <property type="project" value="UniProtKB-KW"/>
</dbReference>
<dbReference type="GO" id="GO:0004550">
    <property type="term" value="F:nucleoside diphosphate kinase activity"/>
    <property type="evidence" value="ECO:0007669"/>
    <property type="project" value="UniProtKB-UniRule"/>
</dbReference>
<dbReference type="GO" id="GO:0006241">
    <property type="term" value="P:CTP biosynthetic process"/>
    <property type="evidence" value="ECO:0007669"/>
    <property type="project" value="UniProtKB-UniRule"/>
</dbReference>
<dbReference type="GO" id="GO:0006183">
    <property type="term" value="P:GTP biosynthetic process"/>
    <property type="evidence" value="ECO:0007669"/>
    <property type="project" value="UniProtKB-UniRule"/>
</dbReference>
<dbReference type="GO" id="GO:0006228">
    <property type="term" value="P:UTP biosynthetic process"/>
    <property type="evidence" value="ECO:0007669"/>
    <property type="project" value="UniProtKB-UniRule"/>
</dbReference>
<dbReference type="CDD" id="cd04413">
    <property type="entry name" value="NDPk_I"/>
    <property type="match status" value="1"/>
</dbReference>
<dbReference type="FunFam" id="3.30.70.141:FF:000002">
    <property type="entry name" value="Nucleoside diphosphate kinase"/>
    <property type="match status" value="1"/>
</dbReference>
<dbReference type="Gene3D" id="3.30.70.141">
    <property type="entry name" value="Nucleoside diphosphate kinase-like domain"/>
    <property type="match status" value="1"/>
</dbReference>
<dbReference type="HAMAP" id="MF_00451">
    <property type="entry name" value="NDP_kinase"/>
    <property type="match status" value="1"/>
</dbReference>
<dbReference type="InterPro" id="IPR034907">
    <property type="entry name" value="NDK-like_dom"/>
</dbReference>
<dbReference type="InterPro" id="IPR036850">
    <property type="entry name" value="NDK-like_dom_sf"/>
</dbReference>
<dbReference type="InterPro" id="IPR001564">
    <property type="entry name" value="Nucleoside_diP_kinase"/>
</dbReference>
<dbReference type="NCBIfam" id="NF001908">
    <property type="entry name" value="PRK00668.1"/>
    <property type="match status" value="1"/>
</dbReference>
<dbReference type="PANTHER" id="PTHR11349">
    <property type="entry name" value="NUCLEOSIDE DIPHOSPHATE KINASE"/>
    <property type="match status" value="1"/>
</dbReference>
<dbReference type="Pfam" id="PF00334">
    <property type="entry name" value="NDK"/>
    <property type="match status" value="1"/>
</dbReference>
<dbReference type="PRINTS" id="PR01243">
    <property type="entry name" value="NUCDPKINASE"/>
</dbReference>
<dbReference type="SMART" id="SM00562">
    <property type="entry name" value="NDK"/>
    <property type="match status" value="1"/>
</dbReference>
<dbReference type="SUPFAM" id="SSF54919">
    <property type="entry name" value="Nucleoside diphosphate kinase, NDK"/>
    <property type="match status" value="1"/>
</dbReference>
<dbReference type="PROSITE" id="PS51374">
    <property type="entry name" value="NDPK_LIKE"/>
    <property type="match status" value="1"/>
</dbReference>
<sequence>MEKTFLMVKPDGVQRELIGEIVKRFETKGYKLAGAKLMQVSNQLAETHYSEHKERPFFGELVDFITSGPVFAMVWEGENVIATARKMMGKTNPLEADPSTIRGDFGISVGKNIIHGSDSAESAEREITLFFTENEIVSYEKQANNWIY</sequence>
<organism>
    <name type="scientific">Oceanobacillus iheyensis (strain DSM 14371 / CIP 107618 / JCM 11309 / KCTC 3954 / HTE831)</name>
    <dbReference type="NCBI Taxonomy" id="221109"/>
    <lineage>
        <taxon>Bacteria</taxon>
        <taxon>Bacillati</taxon>
        <taxon>Bacillota</taxon>
        <taxon>Bacilli</taxon>
        <taxon>Bacillales</taxon>
        <taxon>Bacillaceae</taxon>
        <taxon>Oceanobacillus</taxon>
    </lineage>
</organism>
<accession>Q8EQB4</accession>